<gene>
    <name type="primary">lgtE</name>
</gene>
<proteinExistence type="inferred from homology"/>
<feature type="chain" id="PRO_0000216238" description="Lacto-N-neotetraose biosynthesis glycosyltransferase LgtE">
    <location>
        <begin position="1"/>
        <end position="280"/>
    </location>
</feature>
<protein>
    <recommendedName>
        <fullName>Lacto-N-neotetraose biosynthesis glycosyltransferase LgtE</fullName>
        <ecNumber>2.-.-.-</ecNumber>
    </recommendedName>
</protein>
<organism>
    <name type="scientific">Neisseria gonorrhoeae</name>
    <dbReference type="NCBI Taxonomy" id="485"/>
    <lineage>
        <taxon>Bacteria</taxon>
        <taxon>Pseudomonadati</taxon>
        <taxon>Pseudomonadota</taxon>
        <taxon>Betaproteobacteria</taxon>
        <taxon>Neisseriales</taxon>
        <taxon>Neisseriaceae</taxon>
        <taxon>Neisseria</taxon>
    </lineage>
</organism>
<reference key="1">
    <citation type="journal article" date="1994" name="J. Exp. Med.">
        <title>Genetic locus for the biosynthesis of the variable portion of Neisseria gonorrhoeae lipooligosaccharide.</title>
        <authorList>
            <person name="Gotschlich E.C."/>
        </authorList>
    </citation>
    <scope>NUCLEOTIDE SEQUENCE [GENOMIC DNA]</scope>
    <source>
        <strain>ATCC 33084 / F62 / M-1914</strain>
    </source>
</reference>
<comment type="function">
    <text>Adds the first galactose to the lacto-N-tetraose chain in lipooligosaccharide (LOS).</text>
</comment>
<comment type="pathway">
    <text>Glycan metabolism; lacto-N-neotetraose biosynthesis.</text>
</comment>
<comment type="pathway">
    <text>Bacterial outer membrane biogenesis; lipooligosaccharide biosynthesis.</text>
</comment>
<comment type="similarity">
    <text evidence="1">Belongs to the glycosyltransferase 25 family.</text>
</comment>
<keyword id="KW-0328">Glycosyltransferase</keyword>
<keyword id="KW-0448">Lipopolysaccharide biosynthesis</keyword>
<keyword id="KW-0808">Transferase</keyword>
<dbReference type="EC" id="2.-.-.-"/>
<dbReference type="EMBL" id="U14554">
    <property type="protein sequence ID" value="AAA68013.1"/>
    <property type="molecule type" value="Genomic_DNA"/>
</dbReference>
<dbReference type="RefSeq" id="WP_003705017.1">
    <property type="nucleotide sequence ID" value="NZ_JAJQTI010000001.1"/>
</dbReference>
<dbReference type="SMR" id="Q50950"/>
<dbReference type="CAZy" id="GT25">
    <property type="family name" value="Glycosyltransferase Family 25"/>
</dbReference>
<dbReference type="UniPathway" id="UPA00501"/>
<dbReference type="UniPathway" id="UPA00820"/>
<dbReference type="GO" id="GO:0016757">
    <property type="term" value="F:glycosyltransferase activity"/>
    <property type="evidence" value="ECO:0007669"/>
    <property type="project" value="UniProtKB-KW"/>
</dbReference>
<dbReference type="GO" id="GO:0009103">
    <property type="term" value="P:lipopolysaccharide biosynthetic process"/>
    <property type="evidence" value="ECO:0007669"/>
    <property type="project" value="UniProtKB-KW"/>
</dbReference>
<dbReference type="CDD" id="cd06532">
    <property type="entry name" value="Glyco_transf_25"/>
    <property type="match status" value="1"/>
</dbReference>
<dbReference type="InterPro" id="IPR002654">
    <property type="entry name" value="Glyco_trans_25"/>
</dbReference>
<dbReference type="Pfam" id="PF01755">
    <property type="entry name" value="Glyco_transf_25"/>
    <property type="match status" value="1"/>
</dbReference>
<evidence type="ECO:0000305" key="1"/>
<accession>Q50950</accession>
<name>LGTE_NEIGO</name>
<sequence length="280" mass="32420">MQNHVISLASAAERRAHIADTFGSRGIPFQFFDALMPSERLEQAMAELVPGLSAHPYLSGVEKACFMSHAVLWEQALDEGLPYIAVFEDDVLLGEGAEQFLAEDTWLEERFDKDSAFIVRLETMFAKVIVRPDKVLNYENRSFPLLESEHCGTAGYIISREAMRFFLDRFAVLPPERIKAVDLMMFTYFFDKEGMPVYQVSPALCTQELHYAKFLSQNSMLGSDLEKDREQGRRHRRSLKVMFDLKRALGKFGREKKKRMERQRQAELEKVYGRRVILFK</sequence>